<evidence type="ECO:0000255" key="1">
    <source>
        <dbReference type="HAMAP-Rule" id="MF_00276"/>
    </source>
</evidence>
<dbReference type="EMBL" id="BA000017">
    <property type="protein sequence ID" value="BAB58237.1"/>
    <property type="molecule type" value="Genomic_DNA"/>
</dbReference>
<dbReference type="RefSeq" id="WP_001092411.1">
    <property type="nucleotide sequence ID" value="NC_002758.2"/>
</dbReference>
<dbReference type="SMR" id="P65213"/>
<dbReference type="KEGG" id="sav:SAV2075"/>
<dbReference type="HOGENOM" id="CLU_077094_2_0_9"/>
<dbReference type="PhylomeDB" id="P65213"/>
<dbReference type="Proteomes" id="UP000002481">
    <property type="component" value="Chromosome"/>
</dbReference>
<dbReference type="GO" id="GO:0005886">
    <property type="term" value="C:plasma membrane"/>
    <property type="evidence" value="ECO:0007669"/>
    <property type="project" value="UniProtKB-SubCell"/>
</dbReference>
<dbReference type="GO" id="GO:0005524">
    <property type="term" value="F:ATP binding"/>
    <property type="evidence" value="ECO:0007669"/>
    <property type="project" value="UniProtKB-UniRule"/>
</dbReference>
<dbReference type="GO" id="GO:0008556">
    <property type="term" value="F:P-type potassium transmembrane transporter activity"/>
    <property type="evidence" value="ECO:0007669"/>
    <property type="project" value="InterPro"/>
</dbReference>
<dbReference type="HAMAP" id="MF_00276">
    <property type="entry name" value="KdpC"/>
    <property type="match status" value="1"/>
</dbReference>
<dbReference type="InterPro" id="IPR003820">
    <property type="entry name" value="KdpC"/>
</dbReference>
<dbReference type="NCBIfam" id="TIGR00681">
    <property type="entry name" value="kdpC"/>
    <property type="match status" value="1"/>
</dbReference>
<dbReference type="NCBIfam" id="NF010602">
    <property type="entry name" value="PRK13998.1"/>
    <property type="match status" value="1"/>
</dbReference>
<dbReference type="PANTHER" id="PTHR30042">
    <property type="entry name" value="POTASSIUM-TRANSPORTING ATPASE C CHAIN"/>
    <property type="match status" value="1"/>
</dbReference>
<dbReference type="PANTHER" id="PTHR30042:SF2">
    <property type="entry name" value="POTASSIUM-TRANSPORTING ATPASE KDPC SUBUNIT"/>
    <property type="match status" value="1"/>
</dbReference>
<dbReference type="Pfam" id="PF02669">
    <property type="entry name" value="KdpC"/>
    <property type="match status" value="1"/>
</dbReference>
<dbReference type="PIRSF" id="PIRSF001296">
    <property type="entry name" value="K_ATPase_KdpC"/>
    <property type="match status" value="1"/>
</dbReference>
<reference key="1">
    <citation type="journal article" date="2001" name="Lancet">
        <title>Whole genome sequencing of meticillin-resistant Staphylococcus aureus.</title>
        <authorList>
            <person name="Kuroda M."/>
            <person name="Ohta T."/>
            <person name="Uchiyama I."/>
            <person name="Baba T."/>
            <person name="Yuzawa H."/>
            <person name="Kobayashi I."/>
            <person name="Cui L."/>
            <person name="Oguchi A."/>
            <person name="Aoki K."/>
            <person name="Nagai Y."/>
            <person name="Lian J.-Q."/>
            <person name="Ito T."/>
            <person name="Kanamori M."/>
            <person name="Matsumaru H."/>
            <person name="Maruyama A."/>
            <person name="Murakami H."/>
            <person name="Hosoyama A."/>
            <person name="Mizutani-Ui Y."/>
            <person name="Takahashi N.K."/>
            <person name="Sawano T."/>
            <person name="Inoue R."/>
            <person name="Kaito C."/>
            <person name="Sekimizu K."/>
            <person name="Hirakawa H."/>
            <person name="Kuhara S."/>
            <person name="Goto S."/>
            <person name="Yabuzaki J."/>
            <person name="Kanehisa M."/>
            <person name="Yamashita A."/>
            <person name="Oshima K."/>
            <person name="Furuya K."/>
            <person name="Yoshino C."/>
            <person name="Shiba T."/>
            <person name="Hattori M."/>
            <person name="Ogasawara N."/>
            <person name="Hayashi H."/>
            <person name="Hiramatsu K."/>
        </authorList>
    </citation>
    <scope>NUCLEOTIDE SEQUENCE [LARGE SCALE GENOMIC DNA]</scope>
    <source>
        <strain>Mu50 / ATCC 700699</strain>
    </source>
</reference>
<keyword id="KW-0067">ATP-binding</keyword>
<keyword id="KW-1003">Cell membrane</keyword>
<keyword id="KW-0406">Ion transport</keyword>
<keyword id="KW-0472">Membrane</keyword>
<keyword id="KW-0547">Nucleotide-binding</keyword>
<keyword id="KW-0630">Potassium</keyword>
<keyword id="KW-0633">Potassium transport</keyword>
<keyword id="KW-0812">Transmembrane</keyword>
<keyword id="KW-1133">Transmembrane helix</keyword>
<keyword id="KW-0813">Transport</keyword>
<accession>P65213</accession>
<accession>Q99SI1</accession>
<gene>
    <name evidence="1" type="primary">kdpC1</name>
    <name type="ordered locus">SAV2075</name>
</gene>
<sequence length="186" mass="20618">MNTIRNSICLTIITMVLCGFLFPLAITLIGQIFFYQQANGSLITYDNRIVGSKLIGQHWTETRYFHGRPSAVDYNMNPEKLYKNGVSSGGSNESNGNTELIARMKHHVKFGNSNVTIDAATSSGSGLDPHITVENALKQAPRIADARHVSTSRVADLIQHRKQRGVLTNDYVNVLELNIALDKMKD</sequence>
<name>KDPC1_STAAM</name>
<proteinExistence type="inferred from homology"/>
<feature type="chain" id="PRO_0000197013" description="Potassium-transporting ATPase KdpC subunit 1">
    <location>
        <begin position="1"/>
        <end position="186"/>
    </location>
</feature>
<feature type="transmembrane region" description="Helical" evidence="1">
    <location>
        <begin position="10"/>
        <end position="30"/>
    </location>
</feature>
<protein>
    <recommendedName>
        <fullName evidence="1">Potassium-transporting ATPase KdpC subunit 1</fullName>
    </recommendedName>
    <alternativeName>
        <fullName evidence="1">ATP phosphohydrolase [potassium-transporting] C chain 1</fullName>
    </alternativeName>
    <alternativeName>
        <fullName evidence="1">Potassium-binding and translocating subunit C 1</fullName>
    </alternativeName>
    <alternativeName>
        <fullName evidence="1">Potassium-translocating ATPase C chain 1</fullName>
    </alternativeName>
</protein>
<organism>
    <name type="scientific">Staphylococcus aureus (strain Mu50 / ATCC 700699)</name>
    <dbReference type="NCBI Taxonomy" id="158878"/>
    <lineage>
        <taxon>Bacteria</taxon>
        <taxon>Bacillati</taxon>
        <taxon>Bacillota</taxon>
        <taxon>Bacilli</taxon>
        <taxon>Bacillales</taxon>
        <taxon>Staphylococcaceae</taxon>
        <taxon>Staphylococcus</taxon>
    </lineage>
</organism>
<comment type="function">
    <text evidence="1">Part of the high-affinity ATP-driven potassium transport (or Kdp) system, which catalyzes the hydrolysis of ATP coupled with the electrogenic transport of potassium into the cytoplasm. This subunit acts as a catalytic chaperone that increases the ATP-binding affinity of the ATP-hydrolyzing subunit KdpB by the formation of a transient KdpB/KdpC/ATP ternary complex.</text>
</comment>
<comment type="subunit">
    <text evidence="1">The system is composed of three essential subunits: KdpA, KdpB and KdpC.</text>
</comment>
<comment type="subcellular location">
    <subcellularLocation>
        <location evidence="1">Cell membrane</location>
        <topology evidence="1">Single-pass membrane protein</topology>
    </subcellularLocation>
</comment>
<comment type="similarity">
    <text evidence="1">Belongs to the KdpC family.</text>
</comment>